<protein>
    <recommendedName>
        <fullName evidence="1">Photosystem II CP47 reaction center protein</fullName>
    </recommendedName>
    <alternativeName>
        <fullName evidence="1">PSII 47 kDa protein</fullName>
    </alternativeName>
    <alternativeName>
        <fullName evidence="1">Protein CP-47</fullName>
    </alternativeName>
</protein>
<gene>
    <name evidence="1" type="primary">psbB</name>
</gene>
<comment type="function">
    <text evidence="1">One of the components of the core complex of photosystem II (PSII). It binds chlorophyll and helps catalyze the primary light-induced photochemical processes of PSII. PSII is a light-driven water:plastoquinone oxidoreductase, using light energy to abstract electrons from H(2)O, generating O(2) and a proton gradient subsequently used for ATP formation.</text>
</comment>
<comment type="cofactor">
    <text evidence="1">Binds multiple chlorophylls. PSII binds additional chlorophylls, carotenoids and specific lipids.</text>
</comment>
<comment type="subunit">
    <text evidence="1">PSII is composed of 1 copy each of membrane proteins PsbA, PsbB, PsbC, PsbD, PsbE, PsbF, PsbH, PsbI, PsbJ, PsbK, PsbL, PsbM, PsbT, PsbX, PsbY, PsbZ, Psb30/Ycf12, at least 3 peripheral proteins of the oxygen-evolving complex and a large number of cofactors. It forms dimeric complexes.</text>
</comment>
<comment type="subcellular location">
    <subcellularLocation>
        <location evidence="1">Plastid</location>
        <location evidence="1">Chloroplast thylakoid membrane</location>
        <topology evidence="1">Multi-pass membrane protein</topology>
    </subcellularLocation>
</comment>
<comment type="similarity">
    <text evidence="1">Belongs to the PsbB/PsbC family. PsbB subfamily.</text>
</comment>
<name>PSBB_PHYPA</name>
<feature type="chain" id="PRO_0000359855" description="Photosystem II CP47 reaction center protein">
    <location>
        <begin position="1"/>
        <end position="512"/>
    </location>
</feature>
<feature type="transmembrane region" description="Helical" evidence="1">
    <location>
        <begin position="21"/>
        <end position="36"/>
    </location>
</feature>
<feature type="transmembrane region" description="Helical" evidence="1">
    <location>
        <begin position="101"/>
        <end position="115"/>
    </location>
</feature>
<feature type="transmembrane region" description="Helical" evidence="1">
    <location>
        <begin position="140"/>
        <end position="156"/>
    </location>
</feature>
<feature type="transmembrane region" description="Helical" evidence="1">
    <location>
        <begin position="203"/>
        <end position="218"/>
    </location>
</feature>
<feature type="transmembrane region" description="Helical" evidence="1">
    <location>
        <begin position="237"/>
        <end position="252"/>
    </location>
</feature>
<feature type="transmembrane region" description="Helical" evidence="1">
    <location>
        <begin position="457"/>
        <end position="472"/>
    </location>
</feature>
<accession>Q6YXM8</accession>
<dbReference type="EMBL" id="AP005672">
    <property type="protein sequence ID" value="BAC85024.1"/>
    <property type="molecule type" value="Genomic_DNA"/>
</dbReference>
<dbReference type="RefSeq" id="NP_904175.1">
    <property type="nucleotide sequence ID" value="NC_005087.2"/>
</dbReference>
<dbReference type="SMR" id="Q6YXM8"/>
<dbReference type="FunCoup" id="Q6YXM8">
    <property type="interactions" value="562"/>
</dbReference>
<dbReference type="STRING" id="3218.Q6YXM8"/>
<dbReference type="GeneID" id="2546696"/>
<dbReference type="KEGG" id="ppp:2546696"/>
<dbReference type="InParanoid" id="Q6YXM8"/>
<dbReference type="OrthoDB" id="375at2759"/>
<dbReference type="Proteomes" id="UP000006727">
    <property type="component" value="Chloroplast"/>
</dbReference>
<dbReference type="GO" id="GO:0009535">
    <property type="term" value="C:chloroplast thylakoid membrane"/>
    <property type="evidence" value="ECO:0007669"/>
    <property type="project" value="UniProtKB-SubCell"/>
</dbReference>
<dbReference type="GO" id="GO:0009523">
    <property type="term" value="C:photosystem II"/>
    <property type="evidence" value="ECO:0007669"/>
    <property type="project" value="UniProtKB-KW"/>
</dbReference>
<dbReference type="GO" id="GO:0016168">
    <property type="term" value="F:chlorophyll binding"/>
    <property type="evidence" value="ECO:0007669"/>
    <property type="project" value="UniProtKB-UniRule"/>
</dbReference>
<dbReference type="GO" id="GO:0045156">
    <property type="term" value="F:electron transporter, transferring electrons within the cyclic electron transport pathway of photosynthesis activity"/>
    <property type="evidence" value="ECO:0007669"/>
    <property type="project" value="InterPro"/>
</dbReference>
<dbReference type="GO" id="GO:0009772">
    <property type="term" value="P:photosynthetic electron transport in photosystem II"/>
    <property type="evidence" value="ECO:0007669"/>
    <property type="project" value="InterPro"/>
</dbReference>
<dbReference type="FunFam" id="3.10.680.10:FF:000001">
    <property type="entry name" value="Photosystem II CP47 reaction center protein"/>
    <property type="match status" value="1"/>
</dbReference>
<dbReference type="Gene3D" id="3.10.680.10">
    <property type="entry name" value="Photosystem II CP47 reaction center protein"/>
    <property type="match status" value="1"/>
</dbReference>
<dbReference type="HAMAP" id="MF_01495">
    <property type="entry name" value="PSII_PsbB_CP47"/>
    <property type="match status" value="1"/>
</dbReference>
<dbReference type="InterPro" id="IPR000932">
    <property type="entry name" value="PS_antenna-like"/>
</dbReference>
<dbReference type="InterPro" id="IPR036001">
    <property type="entry name" value="PS_II_antenna-like_sf"/>
</dbReference>
<dbReference type="InterPro" id="IPR017486">
    <property type="entry name" value="PSII_PsbB"/>
</dbReference>
<dbReference type="NCBIfam" id="TIGR03039">
    <property type="entry name" value="PS_II_CP47"/>
    <property type="match status" value="1"/>
</dbReference>
<dbReference type="Pfam" id="PF00421">
    <property type="entry name" value="PSII"/>
    <property type="match status" value="1"/>
</dbReference>
<dbReference type="SUPFAM" id="SSF161077">
    <property type="entry name" value="Photosystem II antenna protein-like"/>
    <property type="match status" value="1"/>
</dbReference>
<reference key="1">
    <citation type="journal article" date="2003" name="Nucleic Acids Res.">
        <title>Complete chloroplast DNA sequence of the moss Physcomitrella patens: evidence for the loss and relocation of rpoA from the chloroplast to the nucleus.</title>
        <authorList>
            <person name="Sugiura C."/>
            <person name="Kobayashi Y."/>
            <person name="Setsuyuki A."/>
            <person name="Sugita C."/>
            <person name="Sugita M."/>
        </authorList>
    </citation>
    <scope>NUCLEOTIDE SEQUENCE [LARGE SCALE GENOMIC DNA]</scope>
    <source>
        <strain>cv. Gransden 2004</strain>
    </source>
</reference>
<sequence length="512" mass="56800">MGLPWYRVHTVVLNDPGRLIAVHLMHTALVSGWAGSMALYELAVFDPSDPILDPMWRQGMFVIPFMTRLGITKSWGGWSITGETVNNAGIWSYEGVAAVHIVLSGLLFLAAIWHWVYWDLELFRDERTGKPSLDLPKIFGIHLFLSGVLCFAFGAFHVTGLFGPGIWVSDPYGLTGKVQPVVPAWGAEGFDPFVPGGIASHHIAAGILGILAGLFHLSVRPPQRLYKGLRMGNVETVLSSSIAAVFFAAFVVAGTMWYGSAATPVELFGPTRYQWDQGFFQQEIDRRIRASKSENLSLSEAWSKIPEKLAFYDYIGNNPAKGGLFRAGAMDNGDGIAVGWLGHAVFKDREGHELFVRRMPTFFETFPVVLVDEEGIVRADVPFRRAESKYSVEQVGVTVEFYGGELNGVSFSDPATVKKYARRAQLGEIFEFDRATLKSDGVFRSSPRGWFTFGHATFALLFFFGHIWHGARTLFRDVFAGIDPDLDAQVEFGAFQKLGDPTTKRQIITRLI</sequence>
<proteinExistence type="inferred from homology"/>
<organism>
    <name type="scientific">Physcomitrium patens</name>
    <name type="common">Spreading-leaved earth moss</name>
    <name type="synonym">Physcomitrella patens</name>
    <dbReference type="NCBI Taxonomy" id="3218"/>
    <lineage>
        <taxon>Eukaryota</taxon>
        <taxon>Viridiplantae</taxon>
        <taxon>Streptophyta</taxon>
        <taxon>Embryophyta</taxon>
        <taxon>Bryophyta</taxon>
        <taxon>Bryophytina</taxon>
        <taxon>Bryopsida</taxon>
        <taxon>Funariidae</taxon>
        <taxon>Funariales</taxon>
        <taxon>Funariaceae</taxon>
        <taxon>Physcomitrium</taxon>
    </lineage>
</organism>
<keyword id="KW-0148">Chlorophyll</keyword>
<keyword id="KW-0150">Chloroplast</keyword>
<keyword id="KW-0157">Chromophore</keyword>
<keyword id="KW-0472">Membrane</keyword>
<keyword id="KW-0602">Photosynthesis</keyword>
<keyword id="KW-0604">Photosystem II</keyword>
<keyword id="KW-0934">Plastid</keyword>
<keyword id="KW-1185">Reference proteome</keyword>
<keyword id="KW-0793">Thylakoid</keyword>
<keyword id="KW-0812">Transmembrane</keyword>
<keyword id="KW-1133">Transmembrane helix</keyword>
<evidence type="ECO:0000255" key="1">
    <source>
        <dbReference type="HAMAP-Rule" id="MF_01495"/>
    </source>
</evidence>
<geneLocation type="chloroplast"/>